<dbReference type="EC" id="3.6.-.-" evidence="9"/>
<dbReference type="EMBL" id="CP000480">
    <property type="protein sequence ID" value="ABK75660.1"/>
    <property type="molecule type" value="Genomic_DNA"/>
</dbReference>
<dbReference type="EMBL" id="CP001663">
    <property type="protein sequence ID" value="AFP37081.1"/>
    <property type="molecule type" value="Genomic_DNA"/>
</dbReference>
<dbReference type="RefSeq" id="YP_885027.1">
    <property type="nucleotide sequence ID" value="NC_008596.1"/>
</dbReference>
<dbReference type="PDB" id="6LAR">
    <property type="method" value="EM"/>
    <property type="resolution" value="3.70 A"/>
    <property type="chains" value="A/I=1-518"/>
</dbReference>
<dbReference type="PDB" id="6SGW">
    <property type="method" value="EM"/>
    <property type="resolution" value="3.80 A"/>
    <property type="chains" value="A/I=9-91"/>
</dbReference>
<dbReference type="PDB" id="6SGX">
    <property type="method" value="EM"/>
    <property type="resolution" value="3.70 A"/>
    <property type="chains" value="A=11-89"/>
</dbReference>
<dbReference type="PDB" id="6SGY">
    <property type="method" value="EM"/>
    <property type="resolution" value="4.60 A"/>
    <property type="chains" value="A/B=100-518"/>
</dbReference>
<dbReference type="PDB" id="6SGZ">
    <property type="method" value="EM"/>
    <property type="resolution" value="3.90 A"/>
    <property type="chains" value="I=33-91"/>
</dbReference>
<dbReference type="PDB" id="6UMM">
    <property type="method" value="EM"/>
    <property type="resolution" value="3.70 A"/>
    <property type="chains" value="D/I=13-93"/>
</dbReference>
<dbReference type="PDBsum" id="6LAR"/>
<dbReference type="PDBsum" id="6SGW"/>
<dbReference type="PDBsum" id="6SGX"/>
<dbReference type="PDBsum" id="6SGY"/>
<dbReference type="PDBsum" id="6SGZ"/>
<dbReference type="PDBsum" id="6UMM"/>
<dbReference type="EMDB" id="EMD-0862"/>
<dbReference type="EMDB" id="EMD-10186"/>
<dbReference type="EMDB" id="EMD-10187"/>
<dbReference type="EMDB" id="EMD-10188"/>
<dbReference type="EMDB" id="EMD-10189"/>
<dbReference type="EMDB" id="EMD-10190"/>
<dbReference type="EMDB" id="EMD-10191"/>
<dbReference type="EMDB" id="EMD-20820"/>
<dbReference type="SMR" id="A0QQ39"/>
<dbReference type="STRING" id="246196.MSMEG_0616"/>
<dbReference type="PaxDb" id="246196-MSMEI_0600"/>
<dbReference type="KEGG" id="msb:LJ00_03060"/>
<dbReference type="KEGG" id="msg:MSMEI_0600"/>
<dbReference type="KEGG" id="msm:MSMEG_0616"/>
<dbReference type="PATRIC" id="fig|246196.19.peg.612"/>
<dbReference type="eggNOG" id="COG3266">
    <property type="taxonomic scope" value="Bacteria"/>
</dbReference>
<dbReference type="OrthoDB" id="3847604at2"/>
<dbReference type="Proteomes" id="UP000000757">
    <property type="component" value="Chromosome"/>
</dbReference>
<dbReference type="Proteomes" id="UP000006158">
    <property type="component" value="Chromosome"/>
</dbReference>
<dbReference type="GO" id="GO:0005576">
    <property type="term" value="C:extracellular region"/>
    <property type="evidence" value="ECO:0007669"/>
    <property type="project" value="TreeGrafter"/>
</dbReference>
<dbReference type="GO" id="GO:0005886">
    <property type="term" value="C:plasma membrane"/>
    <property type="evidence" value="ECO:0007669"/>
    <property type="project" value="UniProtKB-SubCell"/>
</dbReference>
<dbReference type="GO" id="GO:0005524">
    <property type="term" value="F:ATP binding"/>
    <property type="evidence" value="ECO:0007669"/>
    <property type="project" value="UniProtKB-KW"/>
</dbReference>
<dbReference type="GO" id="GO:0016787">
    <property type="term" value="F:hydrolase activity"/>
    <property type="evidence" value="ECO:0007669"/>
    <property type="project" value="UniProtKB-KW"/>
</dbReference>
<dbReference type="FunFam" id="3.30.2390.20:FF:000001">
    <property type="entry name" value="ESX-1 secretion system ATPase EccB1"/>
    <property type="match status" value="1"/>
</dbReference>
<dbReference type="Gene3D" id="3.30.2390.20">
    <property type="entry name" value="Type VII secretion system EccB, repeat 1 domain"/>
    <property type="match status" value="1"/>
</dbReference>
<dbReference type="Gene3D" id="2.40.50.910">
    <property type="entry name" value="Type VII secretion system EccB, repeat 3 domain"/>
    <property type="match status" value="1"/>
</dbReference>
<dbReference type="InterPro" id="IPR007795">
    <property type="entry name" value="T7SS_EccB"/>
</dbReference>
<dbReference type="InterPro" id="IPR044857">
    <property type="entry name" value="T7SS_EccB_R1"/>
</dbReference>
<dbReference type="InterPro" id="IPR042485">
    <property type="entry name" value="T7SS_EccB_R3"/>
</dbReference>
<dbReference type="NCBIfam" id="TIGR03919">
    <property type="entry name" value="T7SS_EccB"/>
    <property type="match status" value="1"/>
</dbReference>
<dbReference type="PANTHER" id="PTHR40765">
    <property type="entry name" value="ESX-2 SECRETION SYSTEM ATPASE ECCB2"/>
    <property type="match status" value="1"/>
</dbReference>
<dbReference type="PANTHER" id="PTHR40765:SF2">
    <property type="entry name" value="ESX-2 SECRETION SYSTEM ATPASE ECCB2"/>
    <property type="match status" value="1"/>
</dbReference>
<dbReference type="Pfam" id="PF05108">
    <property type="entry name" value="T7SS_ESX1_EccB"/>
    <property type="match status" value="1"/>
</dbReference>
<protein>
    <recommendedName>
        <fullName evidence="2">ESX-3 secretion system ATPase EccB3</fullName>
        <ecNumber evidence="9">3.6.-.-</ecNumber>
    </recommendedName>
    <alternativeName>
        <fullName evidence="2">ESX conserved component B3</fullName>
    </alternativeName>
    <alternativeName>
        <fullName evidence="2">Type VII secretion system protein EccB3</fullName>
        <shortName evidence="2">T7SS protein EccB3</shortName>
    </alternativeName>
</protein>
<sequence>MTGPVNPDDRRSFSSRTPVNENPDGVQYRRGFVTRHQVSGWRFVMRRIASGVALHDTRMLVDPLRTQSRAVLTGALILVTGLVGCFIFSLFRPGGVPGNNAILADRSTSALYVRVGEQLHPVLNLTSARLISGSPDNPTMVKTSEIDKFPRGNLLGIPGAPERMVQNAATDAEWTVCDAVGGANPGVTVIAGPLGADGERAAPLPPDHAVLVHSDAEPNPGDWLLWDGKRSPIDLADRAVTDALGLGGQALAPRPIAAGLFNAVPAAPALTAPVIPDAGAAPQFELSLPVPVGAVVVAYDADNTARYYAVLSDGLQPISPVLAAILRNTDSHGFAQPPRLGPDEVARTPMSRGLDTSAYPDNPVTLVEASAHPVTCAHWTKPSDAAESSLSVLSGAVLPLAEGLHTVDLVGAGAGGAANRVALTPGTGYFVQTVGAEPGSPTAGSMFWVSDTGVRYGIDTAEDDKVVAALGLSTSPLPVPWSVLSQFAAGPALSRGDALVAHDAVSTNPNSARMEASR</sequence>
<comment type="function">
    <text evidence="3 6 7">An ATPase (By similarity). Part of the ESX-3 specialized secretion system, which is required for siderophore-mediated iron acquisition and for the secretion of EsxH and EsxG.</text>
</comment>
<comment type="subunit">
    <text evidence="1">Part of the ESX-3 / type VII secretion system (T7SS), which is composed of cytosolic and membrane components. The ESX-3 membrane complex is composed of EccB3, EccC3, EccD3 and EccE3.</text>
</comment>
<comment type="subcellular location">
    <subcellularLocation>
        <location evidence="1">Cell inner membrane</location>
        <topology evidence="4">Single-pass membrane protein</topology>
    </subcellularLocation>
</comment>
<comment type="similarity">
    <text evidence="9">Belongs to the EccB family.</text>
</comment>
<gene>
    <name evidence="8" type="primary">eccB3</name>
    <name evidence="10" type="ordered locus">MSMEG_0616</name>
    <name evidence="11" type="ordered locus">MSMEI_0600</name>
</gene>
<feature type="chain" id="PRO_0000434990" description="ESX-3 secretion system ATPase EccB3">
    <location>
        <begin position="1"/>
        <end position="518"/>
    </location>
</feature>
<feature type="transmembrane region" description="Helical" evidence="4">
    <location>
        <begin position="71"/>
        <end position="91"/>
    </location>
</feature>
<feature type="region of interest" description="Disordered" evidence="5">
    <location>
        <begin position="1"/>
        <end position="26"/>
    </location>
</feature>
<accession>A0QQ39</accession>
<keyword id="KW-0002">3D-structure</keyword>
<keyword id="KW-0067">ATP-binding</keyword>
<keyword id="KW-0997">Cell inner membrane</keyword>
<keyword id="KW-1003">Cell membrane</keyword>
<keyword id="KW-0378">Hydrolase</keyword>
<keyword id="KW-0472">Membrane</keyword>
<keyword id="KW-0547">Nucleotide-binding</keyword>
<keyword id="KW-1185">Reference proteome</keyword>
<keyword id="KW-0812">Transmembrane</keyword>
<keyword id="KW-1133">Transmembrane helix</keyword>
<keyword id="KW-0813">Transport</keyword>
<evidence type="ECO:0000250" key="1">
    <source>
        <dbReference type="UniProtKB" id="B2HST3"/>
    </source>
</evidence>
<evidence type="ECO:0000250" key="2">
    <source>
        <dbReference type="UniProtKB" id="P9WNR3"/>
    </source>
</evidence>
<evidence type="ECO:0000250" key="3">
    <source>
        <dbReference type="UniProtKB" id="P9WNR7"/>
    </source>
</evidence>
<evidence type="ECO:0000255" key="4"/>
<evidence type="ECO:0000256" key="5">
    <source>
        <dbReference type="SAM" id="MobiDB-lite"/>
    </source>
</evidence>
<evidence type="ECO:0000269" key="6">
    <source>
    </source>
</evidence>
<evidence type="ECO:0000269" key="7">
    <source>
    </source>
</evidence>
<evidence type="ECO:0000303" key="8">
    <source>
    </source>
</evidence>
<evidence type="ECO:0000305" key="9"/>
<evidence type="ECO:0000312" key="10">
    <source>
        <dbReference type="EMBL" id="ABK75660.1"/>
    </source>
</evidence>
<evidence type="ECO:0000312" key="11">
    <source>
        <dbReference type="EMBL" id="AFP37081.1"/>
    </source>
</evidence>
<reference key="1">
    <citation type="submission" date="2006-10" db="EMBL/GenBank/DDBJ databases">
        <authorList>
            <person name="Fleischmann R.D."/>
            <person name="Dodson R.J."/>
            <person name="Haft D.H."/>
            <person name="Merkel J.S."/>
            <person name="Nelson W.C."/>
            <person name="Fraser C.M."/>
        </authorList>
    </citation>
    <scope>NUCLEOTIDE SEQUENCE [LARGE SCALE GENOMIC DNA]</scope>
    <source>
        <strain>ATCC 700084 / mc(2)155</strain>
    </source>
</reference>
<reference key="2">
    <citation type="journal article" date="2007" name="Genome Biol.">
        <title>Interrupted coding sequences in Mycobacterium smegmatis: authentic mutations or sequencing errors?</title>
        <authorList>
            <person name="Deshayes C."/>
            <person name="Perrodou E."/>
            <person name="Gallien S."/>
            <person name="Euphrasie D."/>
            <person name="Schaeffer C."/>
            <person name="Van-Dorsselaer A."/>
            <person name="Poch O."/>
            <person name="Lecompte O."/>
            <person name="Reyrat J.-M."/>
        </authorList>
    </citation>
    <scope>NUCLEOTIDE SEQUENCE [LARGE SCALE GENOMIC DNA]</scope>
    <source>
        <strain>ATCC 700084 / mc(2)155</strain>
    </source>
</reference>
<reference key="3">
    <citation type="journal article" date="2009" name="Genome Res.">
        <title>Ortho-proteogenomics: multiple proteomes investigation through orthology and a new MS-based protocol.</title>
        <authorList>
            <person name="Gallien S."/>
            <person name="Perrodou E."/>
            <person name="Carapito C."/>
            <person name="Deshayes C."/>
            <person name="Reyrat J.-M."/>
            <person name="Van Dorsselaer A."/>
            <person name="Poch O."/>
            <person name="Schaeffer C."/>
            <person name="Lecompte O."/>
        </authorList>
    </citation>
    <scope>NUCLEOTIDE SEQUENCE [LARGE SCALE GENOMIC DNA]</scope>
    <source>
        <strain>ATCC 700084 / mc(2)155</strain>
    </source>
</reference>
<reference key="4">
    <citation type="journal article" date="2009" name="Proc. Natl. Acad. Sci. U.S.A.">
        <title>Mycobacterial Esx-3 is required for mycobactin-mediated iron acquisition.</title>
        <authorList>
            <person name="Siegrist M.S."/>
            <person name="Unnikrishnan M."/>
            <person name="McConnell M.J."/>
            <person name="Borowsky M."/>
            <person name="Cheng T.Y."/>
            <person name="Siddiqi N."/>
            <person name="Fortune S.M."/>
            <person name="Moody D.B."/>
            <person name="Rubin E.J."/>
        </authorList>
    </citation>
    <scope>FUNCTION</scope>
</reference>
<reference key="5">
    <citation type="journal article" date="2014" name="MBio">
        <title>Mycobacterial Esx-3 requires multiple components for iron acquisition.</title>
        <authorList>
            <person name="Siegrist M.S."/>
            <person name="Steigedal M."/>
            <person name="Ahmad R."/>
            <person name="Mehra A."/>
            <person name="Dragset M.S."/>
            <person name="Schuster B.M."/>
            <person name="Philips J.A."/>
            <person name="Carr S.A."/>
            <person name="Rubin E.J."/>
        </authorList>
    </citation>
    <scope>FUNCTION</scope>
</reference>
<organism>
    <name type="scientific">Mycolicibacterium smegmatis (strain ATCC 700084 / mc(2)155)</name>
    <name type="common">Mycobacterium smegmatis</name>
    <dbReference type="NCBI Taxonomy" id="246196"/>
    <lineage>
        <taxon>Bacteria</taxon>
        <taxon>Bacillati</taxon>
        <taxon>Actinomycetota</taxon>
        <taxon>Actinomycetes</taxon>
        <taxon>Mycobacteriales</taxon>
        <taxon>Mycobacteriaceae</taxon>
        <taxon>Mycolicibacterium</taxon>
    </lineage>
</organism>
<proteinExistence type="evidence at protein level"/>
<name>ECCB3_MYCS2</name>